<evidence type="ECO:0000255" key="1">
    <source>
        <dbReference type="HAMAP-Rule" id="MF_01314"/>
    </source>
</evidence>
<keyword id="KW-0067">ATP-binding</keyword>
<keyword id="KW-0238">DNA-binding</keyword>
<keyword id="KW-0547">Nucleotide-binding</keyword>
<keyword id="KW-0597">Phosphoprotein</keyword>
<keyword id="KW-0804">Transcription</keyword>
<keyword id="KW-0805">Transcription regulation</keyword>
<protein>
    <recommendedName>
        <fullName evidence="1">Anaerobic nitric oxide reductase transcription regulator NorR</fullName>
    </recommendedName>
</protein>
<name>NORR_ECO5E</name>
<proteinExistence type="inferred from homology"/>
<accession>B5Z370</accession>
<comment type="function">
    <text evidence="1">Required for the expression of anaerobic nitric oxide (NO) reductase, acts as a transcriptional activator for at least the norVW operon. Activation also requires sigma-54.</text>
</comment>
<comment type="pathway">
    <text evidence="1">Nitrogen metabolism; nitric oxide reduction.</text>
</comment>
<feature type="chain" id="PRO_1000141188" description="Anaerobic nitric oxide reductase transcription regulator NorR">
    <location>
        <begin position="1"/>
        <end position="504"/>
    </location>
</feature>
<feature type="domain" description="Sigma-54 factor interaction" evidence="1">
    <location>
        <begin position="187"/>
        <end position="416"/>
    </location>
</feature>
<feature type="DNA-binding region" description="H-T-H motif" evidence="1">
    <location>
        <begin position="479"/>
        <end position="498"/>
    </location>
</feature>
<feature type="binding site" evidence="1">
    <location>
        <begin position="215"/>
        <end position="222"/>
    </location>
    <ligand>
        <name>ATP</name>
        <dbReference type="ChEBI" id="CHEBI:30616"/>
    </ligand>
</feature>
<feature type="binding site" evidence="1">
    <location>
        <begin position="278"/>
        <end position="287"/>
    </location>
    <ligand>
        <name>ATP</name>
        <dbReference type="ChEBI" id="CHEBI:30616"/>
    </ligand>
</feature>
<feature type="modified residue" description="4-aspartylphosphate" evidence="1">
    <location>
        <position position="57"/>
    </location>
</feature>
<sequence>MSFSVDVLANIAIELQRGIGHQDRFQRLITTLRQVLECDASALLRYDSRQFIPLAIDGLAKDVLGRRFALEGHPRLEAIARAGDVVRFPADSELPDPYDGLIPGQESLKVHACVGLPLFAGQNLIGALTLDGMQPDQFDVFSDEELRLIAALAAGALSNALLIEQLESQNMLPGDAAPFEAVKQTQMIGLSPGMTQLKKEIEIVAASDLNVLISGETGTGKELVAKAIHEASPRAVNPLVYLNCAALPESVAESELFGHVKGAFTGAISNRSGKFEMADNGTLFLDEIGELSLALQAKLLRVLQYGDIQRVGDDRSLRVDVRVLAATNRDLREEVLAGRFRADLFHRLSVFPLSVPPLRERGDDVILLAGYFCEQCRLRQGLSRVVLSAGARNLLQHYSFPGNVRELEHAIHRAVVLARATRSGDEVILEAQHFAFPEVTLPPPEVAAVPVVKQNLREATEAFQRETIRQALAQNHHNWAACARMLETDVANLHRLAKRLGLKD</sequence>
<dbReference type="EMBL" id="CP001164">
    <property type="protein sequence ID" value="ACI38541.1"/>
    <property type="molecule type" value="Genomic_DNA"/>
</dbReference>
<dbReference type="RefSeq" id="WP_000010739.1">
    <property type="nucleotide sequence ID" value="NC_011353.1"/>
</dbReference>
<dbReference type="SMR" id="B5Z370"/>
<dbReference type="KEGG" id="ecf:ECH74115_3958"/>
<dbReference type="HOGENOM" id="CLU_000445_125_0_6"/>
<dbReference type="UniPathway" id="UPA00638"/>
<dbReference type="GO" id="GO:0005524">
    <property type="term" value="F:ATP binding"/>
    <property type="evidence" value="ECO:0007669"/>
    <property type="project" value="UniProtKB-UniRule"/>
</dbReference>
<dbReference type="GO" id="GO:0016887">
    <property type="term" value="F:ATP hydrolysis activity"/>
    <property type="evidence" value="ECO:0007669"/>
    <property type="project" value="InterPro"/>
</dbReference>
<dbReference type="GO" id="GO:0003677">
    <property type="term" value="F:DNA binding"/>
    <property type="evidence" value="ECO:0007669"/>
    <property type="project" value="UniProtKB-KW"/>
</dbReference>
<dbReference type="GO" id="GO:0003700">
    <property type="term" value="F:DNA-binding transcription factor activity"/>
    <property type="evidence" value="ECO:0007669"/>
    <property type="project" value="UniProtKB-UniRule"/>
</dbReference>
<dbReference type="GO" id="GO:0000160">
    <property type="term" value="P:phosphorelay signal transduction system"/>
    <property type="evidence" value="ECO:0007669"/>
    <property type="project" value="UniProtKB-UniRule"/>
</dbReference>
<dbReference type="CDD" id="cd00009">
    <property type="entry name" value="AAA"/>
    <property type="match status" value="1"/>
</dbReference>
<dbReference type="FunFam" id="1.10.10.60:FF:000188">
    <property type="entry name" value="Anaerobic nitric oxide reductase transcription regulator NorR"/>
    <property type="match status" value="1"/>
</dbReference>
<dbReference type="FunFam" id="1.10.8.60:FF:000045">
    <property type="entry name" value="Anaerobic nitric oxide reductase transcription regulator NorR"/>
    <property type="match status" value="1"/>
</dbReference>
<dbReference type="FunFam" id="3.30.450.40:FF:000021">
    <property type="entry name" value="Anaerobic nitric oxide reductase transcription regulator NorR"/>
    <property type="match status" value="1"/>
</dbReference>
<dbReference type="FunFam" id="3.40.50.300:FF:000006">
    <property type="entry name" value="DNA-binding transcriptional regulator NtrC"/>
    <property type="match status" value="1"/>
</dbReference>
<dbReference type="Gene3D" id="1.10.8.60">
    <property type="match status" value="1"/>
</dbReference>
<dbReference type="Gene3D" id="3.30.450.40">
    <property type="match status" value="1"/>
</dbReference>
<dbReference type="Gene3D" id="1.10.10.60">
    <property type="entry name" value="Homeodomain-like"/>
    <property type="match status" value="1"/>
</dbReference>
<dbReference type="Gene3D" id="3.40.50.300">
    <property type="entry name" value="P-loop containing nucleotide triphosphate hydrolases"/>
    <property type="match status" value="1"/>
</dbReference>
<dbReference type="HAMAP" id="MF_01314">
    <property type="entry name" value="NorR"/>
    <property type="match status" value="1"/>
</dbReference>
<dbReference type="InterPro" id="IPR003593">
    <property type="entry name" value="AAA+_ATPase"/>
</dbReference>
<dbReference type="InterPro" id="IPR003018">
    <property type="entry name" value="GAF"/>
</dbReference>
<dbReference type="InterPro" id="IPR029016">
    <property type="entry name" value="GAF-like_dom_sf"/>
</dbReference>
<dbReference type="InterPro" id="IPR009057">
    <property type="entry name" value="Homeodomain-like_sf"/>
</dbReference>
<dbReference type="InterPro" id="IPR023944">
    <property type="entry name" value="NorR"/>
</dbReference>
<dbReference type="InterPro" id="IPR027417">
    <property type="entry name" value="P-loop_NTPase"/>
</dbReference>
<dbReference type="InterPro" id="IPR002078">
    <property type="entry name" value="Sigma_54_int"/>
</dbReference>
<dbReference type="InterPro" id="IPR025662">
    <property type="entry name" value="Sigma_54_int_dom_ATP-bd_1"/>
</dbReference>
<dbReference type="InterPro" id="IPR025943">
    <property type="entry name" value="Sigma_54_int_dom_ATP-bd_2"/>
</dbReference>
<dbReference type="InterPro" id="IPR025944">
    <property type="entry name" value="Sigma_54_int_dom_CS"/>
</dbReference>
<dbReference type="NCBIfam" id="NF003451">
    <property type="entry name" value="PRK05022.1"/>
    <property type="match status" value="1"/>
</dbReference>
<dbReference type="PANTHER" id="PTHR32071:SF35">
    <property type="entry name" value="ANAEROBIC NITRIC OXIDE REDUCTASE TRANSCRIPTION REGULATOR NORR"/>
    <property type="match status" value="1"/>
</dbReference>
<dbReference type="PANTHER" id="PTHR32071">
    <property type="entry name" value="TRANSCRIPTIONAL REGULATORY PROTEIN"/>
    <property type="match status" value="1"/>
</dbReference>
<dbReference type="Pfam" id="PF01590">
    <property type="entry name" value="GAF"/>
    <property type="match status" value="1"/>
</dbReference>
<dbReference type="Pfam" id="PF00158">
    <property type="entry name" value="Sigma54_activat"/>
    <property type="match status" value="1"/>
</dbReference>
<dbReference type="SMART" id="SM00382">
    <property type="entry name" value="AAA"/>
    <property type="match status" value="1"/>
</dbReference>
<dbReference type="SMART" id="SM00065">
    <property type="entry name" value="GAF"/>
    <property type="match status" value="1"/>
</dbReference>
<dbReference type="SUPFAM" id="SSF55781">
    <property type="entry name" value="GAF domain-like"/>
    <property type="match status" value="1"/>
</dbReference>
<dbReference type="SUPFAM" id="SSF46689">
    <property type="entry name" value="Homeodomain-like"/>
    <property type="match status" value="1"/>
</dbReference>
<dbReference type="SUPFAM" id="SSF52540">
    <property type="entry name" value="P-loop containing nucleoside triphosphate hydrolases"/>
    <property type="match status" value="1"/>
</dbReference>
<dbReference type="PROSITE" id="PS00675">
    <property type="entry name" value="SIGMA54_INTERACT_1"/>
    <property type="match status" value="1"/>
</dbReference>
<dbReference type="PROSITE" id="PS00676">
    <property type="entry name" value="SIGMA54_INTERACT_2"/>
    <property type="match status" value="1"/>
</dbReference>
<dbReference type="PROSITE" id="PS00688">
    <property type="entry name" value="SIGMA54_INTERACT_3"/>
    <property type="match status" value="1"/>
</dbReference>
<dbReference type="PROSITE" id="PS50045">
    <property type="entry name" value="SIGMA54_INTERACT_4"/>
    <property type="match status" value="1"/>
</dbReference>
<reference key="1">
    <citation type="journal article" date="2011" name="Proc. Natl. Acad. Sci. U.S.A.">
        <title>Genomic anatomy of Escherichia coli O157:H7 outbreaks.</title>
        <authorList>
            <person name="Eppinger M."/>
            <person name="Mammel M.K."/>
            <person name="Leclerc J.E."/>
            <person name="Ravel J."/>
            <person name="Cebula T.A."/>
        </authorList>
    </citation>
    <scope>NUCLEOTIDE SEQUENCE [LARGE SCALE GENOMIC DNA]</scope>
    <source>
        <strain>EC4115 / EHEC</strain>
    </source>
</reference>
<gene>
    <name evidence="1" type="primary">norR</name>
    <name type="ordered locus">ECH74115_3958</name>
</gene>
<organism>
    <name type="scientific">Escherichia coli O157:H7 (strain EC4115 / EHEC)</name>
    <dbReference type="NCBI Taxonomy" id="444450"/>
    <lineage>
        <taxon>Bacteria</taxon>
        <taxon>Pseudomonadati</taxon>
        <taxon>Pseudomonadota</taxon>
        <taxon>Gammaproteobacteria</taxon>
        <taxon>Enterobacterales</taxon>
        <taxon>Enterobacteriaceae</taxon>
        <taxon>Escherichia</taxon>
    </lineage>
</organism>